<protein>
    <recommendedName>
        <fullName evidence="1">Spermidine export protein MdtI</fullName>
    </recommendedName>
</protein>
<organism>
    <name type="scientific">Escherichia coli (strain SMS-3-5 / SECEC)</name>
    <dbReference type="NCBI Taxonomy" id="439855"/>
    <lineage>
        <taxon>Bacteria</taxon>
        <taxon>Pseudomonadati</taxon>
        <taxon>Pseudomonadota</taxon>
        <taxon>Gammaproteobacteria</taxon>
        <taxon>Enterobacterales</taxon>
        <taxon>Enterobacteriaceae</taxon>
        <taxon>Escherichia</taxon>
    </lineage>
</organism>
<comment type="function">
    <text evidence="1">Catalyzes the excretion of spermidine.</text>
</comment>
<comment type="subunit">
    <text evidence="1">Forms a complex with MdtJ.</text>
</comment>
<comment type="subcellular location">
    <subcellularLocation>
        <location evidence="1">Cell inner membrane</location>
        <topology evidence="1">Multi-pass membrane protein</topology>
    </subcellularLocation>
</comment>
<comment type="similarity">
    <text evidence="1">Belongs to the drug/metabolite transporter (DMT) superfamily. Small multidrug resistance (SMR) (TC 2.A.7.1) family. MdtI subfamily.</text>
</comment>
<dbReference type="EMBL" id="CP000970">
    <property type="protein sequence ID" value="ACB18874.1"/>
    <property type="molecule type" value="Genomic_DNA"/>
</dbReference>
<dbReference type="RefSeq" id="WP_000046661.1">
    <property type="nucleotide sequence ID" value="NC_010498.1"/>
</dbReference>
<dbReference type="SMR" id="B1LET7"/>
<dbReference type="GeneID" id="93775747"/>
<dbReference type="KEGG" id="ecm:EcSMS35_1600"/>
<dbReference type="HOGENOM" id="CLU_133067_0_4_6"/>
<dbReference type="Proteomes" id="UP000007011">
    <property type="component" value="Chromosome"/>
</dbReference>
<dbReference type="GO" id="GO:0005886">
    <property type="term" value="C:plasma membrane"/>
    <property type="evidence" value="ECO:0007669"/>
    <property type="project" value="UniProtKB-SubCell"/>
</dbReference>
<dbReference type="GO" id="GO:0015199">
    <property type="term" value="F:amino-acid betaine transmembrane transporter activity"/>
    <property type="evidence" value="ECO:0007669"/>
    <property type="project" value="TreeGrafter"/>
</dbReference>
<dbReference type="GO" id="GO:0015297">
    <property type="term" value="F:antiporter activity"/>
    <property type="evidence" value="ECO:0007669"/>
    <property type="project" value="TreeGrafter"/>
</dbReference>
<dbReference type="GO" id="GO:0015220">
    <property type="term" value="F:choline transmembrane transporter activity"/>
    <property type="evidence" value="ECO:0007669"/>
    <property type="project" value="TreeGrafter"/>
</dbReference>
<dbReference type="GO" id="GO:0015606">
    <property type="term" value="F:spermidine transmembrane transporter activity"/>
    <property type="evidence" value="ECO:0007669"/>
    <property type="project" value="UniProtKB-UniRule"/>
</dbReference>
<dbReference type="GO" id="GO:0031460">
    <property type="term" value="P:glycine betaine transport"/>
    <property type="evidence" value="ECO:0007669"/>
    <property type="project" value="TreeGrafter"/>
</dbReference>
<dbReference type="FunFam" id="1.10.3730.20:FF:000001">
    <property type="entry name" value="Quaternary ammonium compound resistance transporter SugE"/>
    <property type="match status" value="1"/>
</dbReference>
<dbReference type="Gene3D" id="1.10.3730.20">
    <property type="match status" value="1"/>
</dbReference>
<dbReference type="HAMAP" id="MF_01597">
    <property type="entry name" value="MdtI"/>
    <property type="match status" value="1"/>
</dbReference>
<dbReference type="InterPro" id="IPR000390">
    <property type="entry name" value="Small_drug/metabolite_transptr"/>
</dbReference>
<dbReference type="InterPro" id="IPR045324">
    <property type="entry name" value="Small_multidrug_res"/>
</dbReference>
<dbReference type="InterPro" id="IPR023737">
    <property type="entry name" value="Spermidine_export_MdtI"/>
</dbReference>
<dbReference type="NCBIfam" id="NF007934">
    <property type="entry name" value="PRK10650.1"/>
    <property type="match status" value="1"/>
</dbReference>
<dbReference type="PANTHER" id="PTHR30561">
    <property type="entry name" value="SMR FAMILY PROTON-DEPENDENT DRUG EFFLUX TRANSPORTER SUGE"/>
    <property type="match status" value="1"/>
</dbReference>
<dbReference type="PANTHER" id="PTHR30561:SF6">
    <property type="entry name" value="SPERMIDINE EXPORT PROTEIN MDTI"/>
    <property type="match status" value="1"/>
</dbReference>
<dbReference type="Pfam" id="PF00893">
    <property type="entry name" value="Multi_Drug_Res"/>
    <property type="match status" value="1"/>
</dbReference>
<dbReference type="SUPFAM" id="SSF103481">
    <property type="entry name" value="Multidrug resistance efflux transporter EmrE"/>
    <property type="match status" value="1"/>
</dbReference>
<feature type="chain" id="PRO_1000197312" description="Spermidine export protein MdtI">
    <location>
        <begin position="1"/>
        <end position="109"/>
    </location>
</feature>
<feature type="transmembrane region" description="Helical" evidence="1">
    <location>
        <begin position="6"/>
        <end position="26"/>
    </location>
</feature>
<feature type="transmembrane region" description="Helical" evidence="1">
    <location>
        <begin position="36"/>
        <end position="56"/>
    </location>
</feature>
<feature type="transmembrane region" description="Helical" evidence="1">
    <location>
        <begin position="64"/>
        <end position="84"/>
    </location>
</feature>
<feature type="transmembrane region" description="Helical" evidence="1">
    <location>
        <begin position="88"/>
        <end position="108"/>
    </location>
</feature>
<accession>B1LET7</accession>
<sequence>MAQFEWVHAAWLALAIVLEIVANVFLKFSDGFRRKIFGLLSLAAVLAAFSALSQAVKGIDLSVAYALWGGFGIAATLAAGWILFGQRLNRKGWIGLVLLLAGMIMVKLA</sequence>
<evidence type="ECO:0000255" key="1">
    <source>
        <dbReference type="HAMAP-Rule" id="MF_01597"/>
    </source>
</evidence>
<keyword id="KW-0997">Cell inner membrane</keyword>
<keyword id="KW-1003">Cell membrane</keyword>
<keyword id="KW-0472">Membrane</keyword>
<keyword id="KW-0812">Transmembrane</keyword>
<keyword id="KW-1133">Transmembrane helix</keyword>
<keyword id="KW-0813">Transport</keyword>
<proteinExistence type="inferred from homology"/>
<gene>
    <name evidence="1" type="primary">mdtI</name>
    <name type="ordered locus">EcSMS35_1600</name>
</gene>
<name>MDTI_ECOSM</name>
<reference key="1">
    <citation type="journal article" date="2008" name="J. Bacteriol.">
        <title>Insights into the environmental resistance gene pool from the genome sequence of the multidrug-resistant environmental isolate Escherichia coli SMS-3-5.</title>
        <authorList>
            <person name="Fricke W.F."/>
            <person name="Wright M.S."/>
            <person name="Lindell A.H."/>
            <person name="Harkins D.M."/>
            <person name="Baker-Austin C."/>
            <person name="Ravel J."/>
            <person name="Stepanauskas R."/>
        </authorList>
    </citation>
    <scope>NUCLEOTIDE SEQUENCE [LARGE SCALE GENOMIC DNA]</scope>
    <source>
        <strain>SMS-3-5 / SECEC</strain>
    </source>
</reference>